<gene>
    <name evidence="1" type="primary">purA</name>
    <name type="ordered locus">BSUIS_B1158</name>
</gene>
<feature type="chain" id="PRO_1000073939" description="Adenylosuccinate synthetase">
    <location>
        <begin position="1"/>
        <end position="429"/>
    </location>
</feature>
<feature type="active site" description="Proton acceptor" evidence="1">
    <location>
        <position position="13"/>
    </location>
</feature>
<feature type="active site" description="Proton donor" evidence="1">
    <location>
        <position position="41"/>
    </location>
</feature>
<feature type="binding site" evidence="1">
    <location>
        <begin position="12"/>
        <end position="18"/>
    </location>
    <ligand>
        <name>GTP</name>
        <dbReference type="ChEBI" id="CHEBI:37565"/>
    </ligand>
</feature>
<feature type="binding site" description="in other chain" evidence="1">
    <location>
        <begin position="13"/>
        <end position="16"/>
    </location>
    <ligand>
        <name>IMP</name>
        <dbReference type="ChEBI" id="CHEBI:58053"/>
        <note>ligand shared between dimeric partners</note>
    </ligand>
</feature>
<feature type="binding site" evidence="1">
    <location>
        <position position="13"/>
    </location>
    <ligand>
        <name>Mg(2+)</name>
        <dbReference type="ChEBI" id="CHEBI:18420"/>
    </ligand>
</feature>
<feature type="binding site" description="in other chain" evidence="1">
    <location>
        <begin position="38"/>
        <end position="41"/>
    </location>
    <ligand>
        <name>IMP</name>
        <dbReference type="ChEBI" id="CHEBI:58053"/>
        <note>ligand shared between dimeric partners</note>
    </ligand>
</feature>
<feature type="binding site" evidence="1">
    <location>
        <begin position="40"/>
        <end position="42"/>
    </location>
    <ligand>
        <name>GTP</name>
        <dbReference type="ChEBI" id="CHEBI:37565"/>
    </ligand>
</feature>
<feature type="binding site" evidence="1">
    <location>
        <position position="40"/>
    </location>
    <ligand>
        <name>Mg(2+)</name>
        <dbReference type="ChEBI" id="CHEBI:18420"/>
    </ligand>
</feature>
<feature type="binding site" description="in other chain" evidence="1">
    <location>
        <position position="129"/>
    </location>
    <ligand>
        <name>IMP</name>
        <dbReference type="ChEBI" id="CHEBI:58053"/>
        <note>ligand shared between dimeric partners</note>
    </ligand>
</feature>
<feature type="binding site" evidence="1">
    <location>
        <position position="143"/>
    </location>
    <ligand>
        <name>IMP</name>
        <dbReference type="ChEBI" id="CHEBI:58053"/>
        <note>ligand shared between dimeric partners</note>
    </ligand>
</feature>
<feature type="binding site" description="in other chain" evidence="1">
    <location>
        <position position="223"/>
    </location>
    <ligand>
        <name>IMP</name>
        <dbReference type="ChEBI" id="CHEBI:58053"/>
        <note>ligand shared between dimeric partners</note>
    </ligand>
</feature>
<feature type="binding site" description="in other chain" evidence="1">
    <location>
        <position position="238"/>
    </location>
    <ligand>
        <name>IMP</name>
        <dbReference type="ChEBI" id="CHEBI:58053"/>
        <note>ligand shared between dimeric partners</note>
    </ligand>
</feature>
<feature type="binding site" evidence="1">
    <location>
        <begin position="298"/>
        <end position="304"/>
    </location>
    <ligand>
        <name>substrate</name>
    </ligand>
</feature>
<feature type="binding site" description="in other chain" evidence="1">
    <location>
        <position position="302"/>
    </location>
    <ligand>
        <name>IMP</name>
        <dbReference type="ChEBI" id="CHEBI:58053"/>
        <note>ligand shared between dimeric partners</note>
    </ligand>
</feature>
<feature type="binding site" evidence="1">
    <location>
        <position position="304"/>
    </location>
    <ligand>
        <name>GTP</name>
        <dbReference type="ChEBI" id="CHEBI:37565"/>
    </ligand>
</feature>
<feature type="binding site" evidence="1">
    <location>
        <begin position="330"/>
        <end position="332"/>
    </location>
    <ligand>
        <name>GTP</name>
        <dbReference type="ChEBI" id="CHEBI:37565"/>
    </ligand>
</feature>
<feature type="binding site" evidence="1">
    <location>
        <begin position="412"/>
        <end position="414"/>
    </location>
    <ligand>
        <name>GTP</name>
        <dbReference type="ChEBI" id="CHEBI:37565"/>
    </ligand>
</feature>
<protein>
    <recommendedName>
        <fullName evidence="1">Adenylosuccinate synthetase</fullName>
        <shortName evidence="1">AMPSase</shortName>
        <shortName evidence="1">AdSS</shortName>
        <ecNumber evidence="1">6.3.4.4</ecNumber>
    </recommendedName>
    <alternativeName>
        <fullName evidence="1">IMP--aspartate ligase</fullName>
    </alternativeName>
</protein>
<proteinExistence type="inferred from homology"/>
<dbReference type="EC" id="6.3.4.4" evidence="1"/>
<dbReference type="EMBL" id="CP000912">
    <property type="protein sequence ID" value="ABY40096.1"/>
    <property type="molecule type" value="Genomic_DNA"/>
</dbReference>
<dbReference type="RefSeq" id="WP_006074466.1">
    <property type="nucleotide sequence ID" value="NC_010167.1"/>
</dbReference>
<dbReference type="SMR" id="A9WWG0"/>
<dbReference type="KEGG" id="bmt:BSUIS_B1158"/>
<dbReference type="HOGENOM" id="CLU_029848_0_0_5"/>
<dbReference type="UniPathway" id="UPA00075">
    <property type="reaction ID" value="UER00335"/>
</dbReference>
<dbReference type="Proteomes" id="UP000008545">
    <property type="component" value="Chromosome II"/>
</dbReference>
<dbReference type="GO" id="GO:0005737">
    <property type="term" value="C:cytoplasm"/>
    <property type="evidence" value="ECO:0007669"/>
    <property type="project" value="UniProtKB-SubCell"/>
</dbReference>
<dbReference type="GO" id="GO:0004019">
    <property type="term" value="F:adenylosuccinate synthase activity"/>
    <property type="evidence" value="ECO:0007669"/>
    <property type="project" value="UniProtKB-UniRule"/>
</dbReference>
<dbReference type="GO" id="GO:0005525">
    <property type="term" value="F:GTP binding"/>
    <property type="evidence" value="ECO:0007669"/>
    <property type="project" value="UniProtKB-UniRule"/>
</dbReference>
<dbReference type="GO" id="GO:0000287">
    <property type="term" value="F:magnesium ion binding"/>
    <property type="evidence" value="ECO:0007669"/>
    <property type="project" value="UniProtKB-UniRule"/>
</dbReference>
<dbReference type="GO" id="GO:0044208">
    <property type="term" value="P:'de novo' AMP biosynthetic process"/>
    <property type="evidence" value="ECO:0007669"/>
    <property type="project" value="UniProtKB-UniRule"/>
</dbReference>
<dbReference type="GO" id="GO:0046040">
    <property type="term" value="P:IMP metabolic process"/>
    <property type="evidence" value="ECO:0007669"/>
    <property type="project" value="TreeGrafter"/>
</dbReference>
<dbReference type="CDD" id="cd03108">
    <property type="entry name" value="AdSS"/>
    <property type="match status" value="1"/>
</dbReference>
<dbReference type="FunFam" id="1.10.300.10:FF:000001">
    <property type="entry name" value="Adenylosuccinate synthetase"/>
    <property type="match status" value="1"/>
</dbReference>
<dbReference type="FunFam" id="3.90.170.10:FF:000001">
    <property type="entry name" value="Adenylosuccinate synthetase"/>
    <property type="match status" value="1"/>
</dbReference>
<dbReference type="Gene3D" id="3.40.440.10">
    <property type="entry name" value="Adenylosuccinate Synthetase, subunit A, domain 1"/>
    <property type="match status" value="1"/>
</dbReference>
<dbReference type="Gene3D" id="1.10.300.10">
    <property type="entry name" value="Adenylosuccinate Synthetase, subunit A, domain 2"/>
    <property type="match status" value="1"/>
</dbReference>
<dbReference type="Gene3D" id="3.90.170.10">
    <property type="entry name" value="Adenylosuccinate Synthetase, subunit A, domain 3"/>
    <property type="match status" value="1"/>
</dbReference>
<dbReference type="HAMAP" id="MF_00011">
    <property type="entry name" value="Adenylosucc_synth"/>
    <property type="match status" value="1"/>
</dbReference>
<dbReference type="InterPro" id="IPR018220">
    <property type="entry name" value="Adenylosuccin_syn_GTP-bd"/>
</dbReference>
<dbReference type="InterPro" id="IPR033128">
    <property type="entry name" value="Adenylosuccin_syn_Lys_AS"/>
</dbReference>
<dbReference type="InterPro" id="IPR042109">
    <property type="entry name" value="Adenylosuccinate_synth_dom1"/>
</dbReference>
<dbReference type="InterPro" id="IPR042110">
    <property type="entry name" value="Adenylosuccinate_synth_dom2"/>
</dbReference>
<dbReference type="InterPro" id="IPR042111">
    <property type="entry name" value="Adenylosuccinate_synth_dom3"/>
</dbReference>
<dbReference type="InterPro" id="IPR001114">
    <property type="entry name" value="Adenylosuccinate_synthetase"/>
</dbReference>
<dbReference type="InterPro" id="IPR027417">
    <property type="entry name" value="P-loop_NTPase"/>
</dbReference>
<dbReference type="NCBIfam" id="NF002223">
    <property type="entry name" value="PRK01117.1"/>
    <property type="match status" value="1"/>
</dbReference>
<dbReference type="NCBIfam" id="TIGR00184">
    <property type="entry name" value="purA"/>
    <property type="match status" value="1"/>
</dbReference>
<dbReference type="PANTHER" id="PTHR11846">
    <property type="entry name" value="ADENYLOSUCCINATE SYNTHETASE"/>
    <property type="match status" value="1"/>
</dbReference>
<dbReference type="PANTHER" id="PTHR11846:SF0">
    <property type="entry name" value="ADENYLOSUCCINATE SYNTHETASE"/>
    <property type="match status" value="1"/>
</dbReference>
<dbReference type="Pfam" id="PF00709">
    <property type="entry name" value="Adenylsucc_synt"/>
    <property type="match status" value="1"/>
</dbReference>
<dbReference type="SMART" id="SM00788">
    <property type="entry name" value="Adenylsucc_synt"/>
    <property type="match status" value="1"/>
</dbReference>
<dbReference type="SUPFAM" id="SSF52540">
    <property type="entry name" value="P-loop containing nucleoside triphosphate hydrolases"/>
    <property type="match status" value="1"/>
</dbReference>
<dbReference type="PROSITE" id="PS01266">
    <property type="entry name" value="ADENYLOSUCCIN_SYN_1"/>
    <property type="match status" value="1"/>
</dbReference>
<dbReference type="PROSITE" id="PS00513">
    <property type="entry name" value="ADENYLOSUCCIN_SYN_2"/>
    <property type="match status" value="1"/>
</dbReference>
<organism>
    <name type="scientific">Brucella suis (strain ATCC 23445 / NCTC 10510)</name>
    <dbReference type="NCBI Taxonomy" id="470137"/>
    <lineage>
        <taxon>Bacteria</taxon>
        <taxon>Pseudomonadati</taxon>
        <taxon>Pseudomonadota</taxon>
        <taxon>Alphaproteobacteria</taxon>
        <taxon>Hyphomicrobiales</taxon>
        <taxon>Brucellaceae</taxon>
        <taxon>Brucella/Ochrobactrum group</taxon>
        <taxon>Brucella</taxon>
    </lineage>
</organism>
<accession>A9WWG0</accession>
<sequence length="429" mass="46591">MANVVVVGSQWGDEGKGKIVDWLSERADVIVRYQGGHNAGHTLVIDGVSYKLSLLPSGLVRGKLSVIGNGVVVDPHHFVAEVEKLRGQGIDVTPDVLRVAENAPLILSIHRELDAMREGSNSGLKIGTTKRGIGPAYEDKVGRRAIRVIDLTEPETLRPKVERLLAHHNSLRRGMGLEEIAVETILTELTSVADQILPYIDQVWRVLDERRKAGARILFEGAQGALLDNDHGTYPFVTSSNTVAGQAAAGSGLGPTAIGYVLGITKAYTTRVGEGPFPTELNDEIGEFLGTKGHEFGVVTGRKRRCGWFDAVIVRQTVRTSGINGIALTKLDVLDGLEEIKICVAYELDGKRIDYLPSSMGAQARVKPIYETLPGWSETTAGARSWNDLPAQTVKYVRHIEELIGAPVAMLSTSPEREDTILVTDPFHD</sequence>
<name>PURA_BRUSI</name>
<comment type="function">
    <text evidence="1">Plays an important role in the de novo pathway of purine nucleotide biosynthesis. Catalyzes the first committed step in the biosynthesis of AMP from IMP.</text>
</comment>
<comment type="catalytic activity">
    <reaction evidence="1">
        <text>IMP + L-aspartate + GTP = N(6)-(1,2-dicarboxyethyl)-AMP + GDP + phosphate + 2 H(+)</text>
        <dbReference type="Rhea" id="RHEA:15753"/>
        <dbReference type="ChEBI" id="CHEBI:15378"/>
        <dbReference type="ChEBI" id="CHEBI:29991"/>
        <dbReference type="ChEBI" id="CHEBI:37565"/>
        <dbReference type="ChEBI" id="CHEBI:43474"/>
        <dbReference type="ChEBI" id="CHEBI:57567"/>
        <dbReference type="ChEBI" id="CHEBI:58053"/>
        <dbReference type="ChEBI" id="CHEBI:58189"/>
        <dbReference type="EC" id="6.3.4.4"/>
    </reaction>
</comment>
<comment type="cofactor">
    <cofactor evidence="1">
        <name>Mg(2+)</name>
        <dbReference type="ChEBI" id="CHEBI:18420"/>
    </cofactor>
    <text evidence="1">Binds 1 Mg(2+) ion per subunit.</text>
</comment>
<comment type="pathway">
    <text evidence="1">Purine metabolism; AMP biosynthesis via de novo pathway; AMP from IMP: step 1/2.</text>
</comment>
<comment type="subunit">
    <text evidence="1">Homodimer.</text>
</comment>
<comment type="subcellular location">
    <subcellularLocation>
        <location evidence="1">Cytoplasm</location>
    </subcellularLocation>
</comment>
<comment type="similarity">
    <text evidence="1">Belongs to the adenylosuccinate synthetase family.</text>
</comment>
<evidence type="ECO:0000255" key="1">
    <source>
        <dbReference type="HAMAP-Rule" id="MF_00011"/>
    </source>
</evidence>
<keyword id="KW-0963">Cytoplasm</keyword>
<keyword id="KW-0342">GTP-binding</keyword>
<keyword id="KW-0436">Ligase</keyword>
<keyword id="KW-0460">Magnesium</keyword>
<keyword id="KW-0479">Metal-binding</keyword>
<keyword id="KW-0547">Nucleotide-binding</keyword>
<keyword id="KW-0658">Purine biosynthesis</keyword>
<reference key="1">
    <citation type="submission" date="2007-12" db="EMBL/GenBank/DDBJ databases">
        <title>Brucella suis ATCC 23445 whole genome shotgun sequencing project.</title>
        <authorList>
            <person name="Setubal J.C."/>
            <person name="Bowns C."/>
            <person name="Boyle S."/>
            <person name="Crasta O.R."/>
            <person name="Czar M.J."/>
            <person name="Dharmanolla C."/>
            <person name="Gillespie J.J."/>
            <person name="Kenyon R.W."/>
            <person name="Lu J."/>
            <person name="Mane S."/>
            <person name="Mohapatra S."/>
            <person name="Nagrani S."/>
            <person name="Purkayastha A."/>
            <person name="Rajasimha H.K."/>
            <person name="Shallom J.M."/>
            <person name="Shallom S."/>
            <person name="Shukla M."/>
            <person name="Snyder E.E."/>
            <person name="Sobral B.W."/>
            <person name="Wattam A.R."/>
            <person name="Will R."/>
            <person name="Williams K."/>
            <person name="Yoo H."/>
            <person name="Bruce D."/>
            <person name="Detter C."/>
            <person name="Munk C."/>
            <person name="Brettin T.S."/>
        </authorList>
    </citation>
    <scope>NUCLEOTIDE SEQUENCE [LARGE SCALE GENOMIC DNA]</scope>
    <source>
        <strain>ATCC 23445 / NCTC 10510</strain>
    </source>
</reference>